<name>RS13_YEAST</name>
<sequence>MGRMHSAGKGISSSAIPYSRNAPAWFKLSSESVIEQIVKYARKGLTPSQIGVLLRDAHGVTQARVITGNKIMRILKSNGLAPEIPEDLYYLIKKAVSVRKHLERNRKDKDAKFRLILIESRIHRLARYYRTVAVLPPNWKYESATASALVN</sequence>
<comment type="function">
    <text evidence="7">Component of the ribosome, a large ribonucleoprotein complex responsible for the synthesis of proteins in the cell. The small ribosomal subunit (SSU) binds messenger RNAs (mRNAs) and translates the encoded message by selecting cognate aminoacyl-transfer RNA (tRNA) molecules. The large subunit (LSU) contains the ribosomal catalytic site termed the peptidyl transferase center (PTC), which catalyzes the formation of peptide bonds, thereby polymerizing the amino acids delivered by tRNAs into a polypeptide chain. The nascent polypeptides leave the ribosome through a tunnel in the LSU and interact with protein factors that function in enzymatic processing, targeting, and the membrane insertion of nascent chains at the exit of the ribosomal tunnel.</text>
</comment>
<comment type="subunit">
    <text evidence="2 8">Component of the small ribosomal subunit (SSU). Mature yeast ribosomes consist of a small (40S) and a large (60S) subunit. The 40S small subunit contains 1 molecule of ribosomal RNA (18S rRNA) and 33 different proteins (encoded by 57 genes). The large 60S subunit contains 3 rRNA molecules (25S, 5.8S and 5S rRNA) and 46 different proteins (encoded by 81 genes) (PubMed:22096102, PubMed:9559554).</text>
</comment>
<comment type="subcellular location">
    <subcellularLocation>
        <location evidence="2">Cytoplasm</location>
    </subcellularLocation>
</comment>
<comment type="similarity">
    <text evidence="6">Belongs to the universal ribosomal protein uS15 family.</text>
</comment>
<protein>
    <recommendedName>
        <fullName evidence="4">Small ribosomal subunit protein uS15</fullName>
    </recommendedName>
    <alternativeName>
        <fullName evidence="5">40S ribosomal protein S13</fullName>
    </alternativeName>
    <alternativeName>
        <fullName>S27a</fullName>
    </alternativeName>
    <alternativeName>
        <fullName>YS15</fullName>
    </alternativeName>
</protein>
<keyword id="KW-0002">3D-structure</keyword>
<keyword id="KW-0963">Cytoplasm</keyword>
<keyword id="KW-0903">Direct protein sequencing</keyword>
<keyword id="KW-1017">Isopeptide bond</keyword>
<keyword id="KW-0597">Phosphoprotein</keyword>
<keyword id="KW-1185">Reference proteome</keyword>
<keyword id="KW-0687">Ribonucleoprotein</keyword>
<keyword id="KW-0689">Ribosomal protein</keyword>
<keyword id="KW-0832">Ubl conjugation</keyword>
<feature type="initiator methionine" description="Removed" evidence="1 3">
    <location>
        <position position="1"/>
    </location>
</feature>
<feature type="chain" id="PRO_0000115689" description="Small ribosomal subunit protein uS15">
    <location>
        <begin position="2"/>
        <end position="151"/>
    </location>
</feature>
<feature type="modified residue" description="Phosphoserine" evidence="9">
    <location>
        <position position="32"/>
    </location>
</feature>
<feature type="cross-link" description="Glycyl lysine isopeptide (Lys-Gly) (interchain with G-Cter in ubiquitin)" evidence="10">
    <location>
        <position position="39"/>
    </location>
</feature>
<feature type="cross-link" description="Glycyl lysine isopeptide (Lys-Gly) (interchain with G-Cter in ubiquitin)" evidence="10">
    <location>
        <position position="43"/>
    </location>
</feature>
<feature type="sequence conflict" description="In Ref. 4; AA sequence." evidence="6" ref="4">
    <original>W</original>
    <variation>G</variation>
    <location>
        <position position="25"/>
    </location>
</feature>
<feature type="sequence conflict" description="In Ref. 4; AA sequence." evidence="6" ref="4">
    <original>S</original>
    <variation>C</variation>
    <location>
        <position position="32"/>
    </location>
</feature>
<feature type="strand" evidence="11">
    <location>
        <begin position="4"/>
        <end position="7"/>
    </location>
</feature>
<feature type="helix" evidence="11">
    <location>
        <begin position="30"/>
        <end position="42"/>
    </location>
</feature>
<feature type="helix" evidence="11">
    <location>
        <begin position="47"/>
        <end position="57"/>
    </location>
</feature>
<feature type="helix" evidence="11">
    <location>
        <begin position="63"/>
        <end position="66"/>
    </location>
</feature>
<feature type="strand" evidence="11">
    <location>
        <begin position="67"/>
        <end position="69"/>
    </location>
</feature>
<feature type="helix" evidence="11">
    <location>
        <begin position="71"/>
        <end position="76"/>
    </location>
</feature>
<feature type="turn" evidence="11">
    <location>
        <begin position="77"/>
        <end position="79"/>
    </location>
</feature>
<feature type="helix" evidence="11">
    <location>
        <begin position="86"/>
        <end position="104"/>
    </location>
</feature>
<feature type="helix" evidence="11">
    <location>
        <begin position="109"/>
        <end position="131"/>
    </location>
</feature>
<feature type="turn" evidence="11">
    <location>
        <begin position="143"/>
        <end position="145"/>
    </location>
</feature>
<feature type="helix" evidence="11">
    <location>
        <begin position="146"/>
        <end position="150"/>
    </location>
</feature>
<gene>
    <name evidence="5" type="primary">RPS13</name>
    <name type="synonym">RPS13C</name>
    <name type="ordered locus">YDR064W</name>
    <name type="ORF">D4252</name>
    <name type="ORF">YD9609.18</name>
</gene>
<evidence type="ECO:0000269" key="1">
    <source>
    </source>
</evidence>
<evidence type="ECO:0000269" key="2">
    <source>
    </source>
</evidence>
<evidence type="ECO:0000269" key="3">
    <source>
    </source>
</evidence>
<evidence type="ECO:0000303" key="4">
    <source>
    </source>
</evidence>
<evidence type="ECO:0000303" key="5">
    <source>
    </source>
</evidence>
<evidence type="ECO:0000305" key="6"/>
<evidence type="ECO:0000305" key="7">
    <source>
    </source>
</evidence>
<evidence type="ECO:0000305" key="8">
    <source>
    </source>
</evidence>
<evidence type="ECO:0007744" key="9">
    <source>
    </source>
</evidence>
<evidence type="ECO:0007744" key="10">
    <source>
    </source>
</evidence>
<evidence type="ECO:0007829" key="11">
    <source>
        <dbReference type="PDB" id="8C01"/>
    </source>
</evidence>
<accession>P05756</accession>
<accession>D6VS50</accession>
<dbReference type="EMBL" id="X84162">
    <property type="protein sequence ID" value="CAA58980.1"/>
    <property type="molecule type" value="Genomic_DNA"/>
</dbReference>
<dbReference type="EMBL" id="Z49209">
    <property type="protein sequence ID" value="CAA89093.1"/>
    <property type="molecule type" value="Genomic_DNA"/>
</dbReference>
<dbReference type="EMBL" id="Z74360">
    <property type="protein sequence ID" value="CAA98882.1"/>
    <property type="molecule type" value="Genomic_DNA"/>
</dbReference>
<dbReference type="EMBL" id="BK006938">
    <property type="protein sequence ID" value="DAA11910.1"/>
    <property type="molecule type" value="Genomic_DNA"/>
</dbReference>
<dbReference type="PIR" id="S54048">
    <property type="entry name" value="S54048"/>
</dbReference>
<dbReference type="RefSeq" id="NP_010349.3">
    <property type="nucleotide sequence ID" value="NM_001180372.3"/>
</dbReference>
<dbReference type="PDB" id="3J6X">
    <property type="method" value="EM"/>
    <property type="resolution" value="6.10 A"/>
    <property type="chains" value="13=1-151"/>
</dbReference>
<dbReference type="PDB" id="3J6Y">
    <property type="method" value="EM"/>
    <property type="resolution" value="6.10 A"/>
    <property type="chains" value="13=1-151"/>
</dbReference>
<dbReference type="PDB" id="3J77">
    <property type="method" value="EM"/>
    <property type="resolution" value="6.20 A"/>
    <property type="chains" value="13=1-151"/>
</dbReference>
<dbReference type="PDB" id="3J78">
    <property type="method" value="EM"/>
    <property type="resolution" value="6.30 A"/>
    <property type="chains" value="13=1-151"/>
</dbReference>
<dbReference type="PDB" id="4U3M">
    <property type="method" value="X-ray"/>
    <property type="resolution" value="3.00 A"/>
    <property type="chains" value="C3/c3=2-151"/>
</dbReference>
<dbReference type="PDB" id="4U3N">
    <property type="method" value="X-ray"/>
    <property type="resolution" value="3.20 A"/>
    <property type="chains" value="C3/c3=2-151"/>
</dbReference>
<dbReference type="PDB" id="4U3U">
    <property type="method" value="X-ray"/>
    <property type="resolution" value="2.90 A"/>
    <property type="chains" value="C3/c3=2-151"/>
</dbReference>
<dbReference type="PDB" id="4U4N">
    <property type="method" value="X-ray"/>
    <property type="resolution" value="3.10 A"/>
    <property type="chains" value="C3/c3=2-151"/>
</dbReference>
<dbReference type="PDB" id="4U4O">
    <property type="method" value="X-ray"/>
    <property type="resolution" value="3.60 A"/>
    <property type="chains" value="C3/c3=2-151"/>
</dbReference>
<dbReference type="PDB" id="4U4Q">
    <property type="method" value="X-ray"/>
    <property type="resolution" value="3.00 A"/>
    <property type="chains" value="C3/c3=2-151"/>
</dbReference>
<dbReference type="PDB" id="4U4R">
    <property type="method" value="X-ray"/>
    <property type="resolution" value="2.80 A"/>
    <property type="chains" value="C3/c3=2-151"/>
</dbReference>
<dbReference type="PDB" id="4U4U">
    <property type="method" value="X-ray"/>
    <property type="resolution" value="3.00 A"/>
    <property type="chains" value="C3/c3=2-151"/>
</dbReference>
<dbReference type="PDB" id="4U4Y">
    <property type="method" value="X-ray"/>
    <property type="resolution" value="3.20 A"/>
    <property type="chains" value="C3/c3=2-151"/>
</dbReference>
<dbReference type="PDB" id="4U4Z">
    <property type="method" value="X-ray"/>
    <property type="resolution" value="3.10 A"/>
    <property type="chains" value="C3/c3=2-151"/>
</dbReference>
<dbReference type="PDB" id="4U50">
    <property type="method" value="X-ray"/>
    <property type="resolution" value="3.20 A"/>
    <property type="chains" value="C3/c3=2-151"/>
</dbReference>
<dbReference type="PDB" id="4U51">
    <property type="method" value="X-ray"/>
    <property type="resolution" value="3.20 A"/>
    <property type="chains" value="C3/c3=2-151"/>
</dbReference>
<dbReference type="PDB" id="4U52">
    <property type="method" value="X-ray"/>
    <property type="resolution" value="3.00 A"/>
    <property type="chains" value="C3/c3=2-151"/>
</dbReference>
<dbReference type="PDB" id="4U53">
    <property type="method" value="X-ray"/>
    <property type="resolution" value="3.30 A"/>
    <property type="chains" value="C3/c3=2-151"/>
</dbReference>
<dbReference type="PDB" id="4U55">
    <property type="method" value="X-ray"/>
    <property type="resolution" value="3.20 A"/>
    <property type="chains" value="C3/c3=2-151"/>
</dbReference>
<dbReference type="PDB" id="4U56">
    <property type="method" value="X-ray"/>
    <property type="resolution" value="3.45 A"/>
    <property type="chains" value="C3/c3=2-151"/>
</dbReference>
<dbReference type="PDB" id="4U6F">
    <property type="method" value="X-ray"/>
    <property type="resolution" value="3.10 A"/>
    <property type="chains" value="C3/c3=2-151"/>
</dbReference>
<dbReference type="PDB" id="4V4B">
    <property type="method" value="EM"/>
    <property type="resolution" value="11.70 A"/>
    <property type="chains" value="AO=66-130"/>
</dbReference>
<dbReference type="PDB" id="4V5Z">
    <property type="method" value="EM"/>
    <property type="resolution" value="8.70 A"/>
    <property type="chains" value="Ao=98-128"/>
</dbReference>
<dbReference type="PDB" id="4V6I">
    <property type="method" value="EM"/>
    <property type="resolution" value="8.80 A"/>
    <property type="chains" value="AO=1-151"/>
</dbReference>
<dbReference type="PDB" id="4V7R">
    <property type="method" value="X-ray"/>
    <property type="resolution" value="4.00 A"/>
    <property type="chains" value="AG/CG=1-151"/>
</dbReference>
<dbReference type="PDB" id="4V88">
    <property type="method" value="X-ray"/>
    <property type="resolution" value="3.00 A"/>
    <property type="chains" value="AN/CN=1-151"/>
</dbReference>
<dbReference type="PDB" id="4V8Y">
    <property type="method" value="EM"/>
    <property type="resolution" value="4.30 A"/>
    <property type="chains" value="AN=1-151"/>
</dbReference>
<dbReference type="PDB" id="4V8Z">
    <property type="method" value="EM"/>
    <property type="resolution" value="6.60 A"/>
    <property type="chains" value="AN=1-151"/>
</dbReference>
<dbReference type="PDB" id="4V92">
    <property type="method" value="EM"/>
    <property type="resolution" value="3.70 A"/>
    <property type="chains" value="N=2-151"/>
</dbReference>
<dbReference type="PDB" id="5DAT">
    <property type="method" value="X-ray"/>
    <property type="resolution" value="3.15 A"/>
    <property type="chains" value="C3/c3=2-151"/>
</dbReference>
<dbReference type="PDB" id="5DC3">
    <property type="method" value="X-ray"/>
    <property type="resolution" value="3.25 A"/>
    <property type="chains" value="C3/c3=2-151"/>
</dbReference>
<dbReference type="PDB" id="5DGE">
    <property type="method" value="X-ray"/>
    <property type="resolution" value="3.45 A"/>
    <property type="chains" value="C3/c3=2-151"/>
</dbReference>
<dbReference type="PDB" id="5DGF">
    <property type="method" value="X-ray"/>
    <property type="resolution" value="3.30 A"/>
    <property type="chains" value="C3/c3=2-151"/>
</dbReference>
<dbReference type="PDB" id="5DGV">
    <property type="method" value="X-ray"/>
    <property type="resolution" value="3.10 A"/>
    <property type="chains" value="C3/c3=2-151"/>
</dbReference>
<dbReference type="PDB" id="5FCI">
    <property type="method" value="X-ray"/>
    <property type="resolution" value="3.40 A"/>
    <property type="chains" value="C3/c3=2-151"/>
</dbReference>
<dbReference type="PDB" id="5FCJ">
    <property type="method" value="X-ray"/>
    <property type="resolution" value="3.10 A"/>
    <property type="chains" value="C3/c3=2-151"/>
</dbReference>
<dbReference type="PDB" id="5I4L">
    <property type="method" value="X-ray"/>
    <property type="resolution" value="3.10 A"/>
    <property type="chains" value="C3/c3=2-151"/>
</dbReference>
<dbReference type="PDB" id="5JPQ">
    <property type="method" value="EM"/>
    <property type="resolution" value="7.30 A"/>
    <property type="chains" value="v=1-151"/>
</dbReference>
<dbReference type="PDB" id="5JUO">
    <property type="method" value="EM"/>
    <property type="resolution" value="4.00 A"/>
    <property type="chains" value="KB=1-151"/>
</dbReference>
<dbReference type="PDB" id="5JUP">
    <property type="method" value="EM"/>
    <property type="resolution" value="3.50 A"/>
    <property type="chains" value="KB=1-151"/>
</dbReference>
<dbReference type="PDB" id="5JUS">
    <property type="method" value="EM"/>
    <property type="resolution" value="4.20 A"/>
    <property type="chains" value="KB=1-151"/>
</dbReference>
<dbReference type="PDB" id="5JUT">
    <property type="method" value="EM"/>
    <property type="resolution" value="4.00 A"/>
    <property type="chains" value="KB=1-151"/>
</dbReference>
<dbReference type="PDB" id="5JUU">
    <property type="method" value="EM"/>
    <property type="resolution" value="4.00 A"/>
    <property type="chains" value="KB=1-151"/>
</dbReference>
<dbReference type="PDB" id="5LL6">
    <property type="method" value="EM"/>
    <property type="resolution" value="3.90 A"/>
    <property type="chains" value="Y=1-151"/>
</dbReference>
<dbReference type="PDB" id="5LYB">
    <property type="method" value="X-ray"/>
    <property type="resolution" value="3.25 A"/>
    <property type="chains" value="C3/c3=2-151"/>
</dbReference>
<dbReference type="PDB" id="5M1J">
    <property type="method" value="EM"/>
    <property type="resolution" value="3.30 A"/>
    <property type="chains" value="N2=2-151"/>
</dbReference>
<dbReference type="PDB" id="5MC6">
    <property type="method" value="EM"/>
    <property type="resolution" value="3.80 A"/>
    <property type="chains" value="Y=1-151"/>
</dbReference>
<dbReference type="PDB" id="5MEI">
    <property type="method" value="X-ray"/>
    <property type="resolution" value="3.50 A"/>
    <property type="chains" value="O/c3=2-151"/>
</dbReference>
<dbReference type="PDB" id="5NDG">
    <property type="method" value="X-ray"/>
    <property type="resolution" value="3.70 A"/>
    <property type="chains" value="C3/c3=2-151"/>
</dbReference>
<dbReference type="PDB" id="5NDV">
    <property type="method" value="X-ray"/>
    <property type="resolution" value="3.30 A"/>
    <property type="chains" value="C3/c3=2-151"/>
</dbReference>
<dbReference type="PDB" id="5NDW">
    <property type="method" value="X-ray"/>
    <property type="resolution" value="3.70 A"/>
    <property type="chains" value="C3/c3=2-151"/>
</dbReference>
<dbReference type="PDB" id="5OBM">
    <property type="method" value="X-ray"/>
    <property type="resolution" value="3.40 A"/>
    <property type="chains" value="C3/c3=2-151"/>
</dbReference>
<dbReference type="PDB" id="5ON6">
    <property type="method" value="X-ray"/>
    <property type="resolution" value="3.10 A"/>
    <property type="chains" value="O/c3=2-151"/>
</dbReference>
<dbReference type="PDB" id="5TBW">
    <property type="method" value="X-ray"/>
    <property type="resolution" value="3.00 A"/>
    <property type="chains" value="O/c3=2-151"/>
</dbReference>
<dbReference type="PDB" id="5TGA">
    <property type="method" value="X-ray"/>
    <property type="resolution" value="3.30 A"/>
    <property type="chains" value="C3/c3=2-151"/>
</dbReference>
<dbReference type="PDB" id="5TGM">
    <property type="method" value="X-ray"/>
    <property type="resolution" value="3.50 A"/>
    <property type="chains" value="C3/c3=2-151"/>
</dbReference>
<dbReference type="PDB" id="5WLC">
    <property type="method" value="EM"/>
    <property type="resolution" value="3.80 A"/>
    <property type="chains" value="NF=1-151"/>
</dbReference>
<dbReference type="PDB" id="5WYJ">
    <property type="method" value="EM"/>
    <property type="resolution" value="8.70 A"/>
    <property type="chains" value="SO=1-151"/>
</dbReference>
<dbReference type="PDB" id="5WYK">
    <property type="method" value="EM"/>
    <property type="resolution" value="4.50 A"/>
    <property type="chains" value="SO=1-151"/>
</dbReference>
<dbReference type="PDB" id="6EML">
    <property type="method" value="EM"/>
    <property type="resolution" value="3.60 A"/>
    <property type="chains" value="Y=1-151"/>
</dbReference>
<dbReference type="PDB" id="6FAI">
    <property type="method" value="EM"/>
    <property type="resolution" value="3.40 A"/>
    <property type="chains" value="N=1-151"/>
</dbReference>
<dbReference type="PDB" id="6GQ1">
    <property type="method" value="EM"/>
    <property type="resolution" value="4.40 A"/>
    <property type="chains" value="AD=2-151"/>
</dbReference>
<dbReference type="PDB" id="6GQB">
    <property type="method" value="EM"/>
    <property type="resolution" value="3.90 A"/>
    <property type="chains" value="AD=2-151"/>
</dbReference>
<dbReference type="PDB" id="6GQV">
    <property type="method" value="EM"/>
    <property type="resolution" value="4.00 A"/>
    <property type="chains" value="AD=2-151"/>
</dbReference>
<dbReference type="PDB" id="6HHQ">
    <property type="method" value="X-ray"/>
    <property type="resolution" value="3.10 A"/>
    <property type="chains" value="O/c3=1-151"/>
</dbReference>
<dbReference type="PDB" id="6I7O">
    <property type="method" value="EM"/>
    <property type="resolution" value="5.30 A"/>
    <property type="chains" value="Y/Yb=2-151"/>
</dbReference>
<dbReference type="PDB" id="6KE6">
    <property type="method" value="EM"/>
    <property type="resolution" value="3.40 A"/>
    <property type="chains" value="SO=1-151"/>
</dbReference>
<dbReference type="PDB" id="6LQP">
    <property type="method" value="EM"/>
    <property type="resolution" value="3.20 A"/>
    <property type="chains" value="SO=1-151"/>
</dbReference>
<dbReference type="PDB" id="6LQQ">
    <property type="method" value="EM"/>
    <property type="resolution" value="4.10 A"/>
    <property type="chains" value="SO=1-151"/>
</dbReference>
<dbReference type="PDB" id="6LQR">
    <property type="method" value="EM"/>
    <property type="resolution" value="8.60 A"/>
    <property type="chains" value="SO=1-151"/>
</dbReference>
<dbReference type="PDB" id="6LQS">
    <property type="method" value="EM"/>
    <property type="resolution" value="3.80 A"/>
    <property type="chains" value="SO=1-151"/>
</dbReference>
<dbReference type="PDB" id="6LQT">
    <property type="method" value="EM"/>
    <property type="resolution" value="4.90 A"/>
    <property type="chains" value="SO=1-151"/>
</dbReference>
<dbReference type="PDB" id="6LQU">
    <property type="method" value="EM"/>
    <property type="resolution" value="3.70 A"/>
    <property type="chains" value="SO=1-151"/>
</dbReference>
<dbReference type="PDB" id="6Q8Y">
    <property type="method" value="EM"/>
    <property type="resolution" value="3.10 A"/>
    <property type="chains" value="Y=2-151"/>
</dbReference>
<dbReference type="PDB" id="6RBD">
    <property type="method" value="EM"/>
    <property type="resolution" value="3.47 A"/>
    <property type="chains" value="N=1-151"/>
</dbReference>
<dbReference type="PDB" id="6RBE">
    <property type="method" value="EM"/>
    <property type="resolution" value="3.80 A"/>
    <property type="chains" value="N=1-151"/>
</dbReference>
<dbReference type="PDB" id="6S47">
    <property type="method" value="EM"/>
    <property type="resolution" value="3.28 A"/>
    <property type="chains" value="BO=2-151"/>
</dbReference>
<dbReference type="PDB" id="6SNT">
    <property type="method" value="EM"/>
    <property type="resolution" value="2.80 A"/>
    <property type="chains" value="N=1-151"/>
</dbReference>
<dbReference type="PDB" id="6SV4">
    <property type="method" value="EM"/>
    <property type="resolution" value="3.30 A"/>
    <property type="chains" value="Y/Yb/Yc=1-151"/>
</dbReference>
<dbReference type="PDB" id="6T4Q">
    <property type="method" value="EM"/>
    <property type="resolution" value="2.60 A"/>
    <property type="chains" value="SN=2-151"/>
</dbReference>
<dbReference type="PDB" id="6T7I">
    <property type="method" value="EM"/>
    <property type="resolution" value="3.20 A"/>
    <property type="chains" value="SN=1-151"/>
</dbReference>
<dbReference type="PDB" id="6T7T">
    <property type="method" value="EM"/>
    <property type="resolution" value="3.10 A"/>
    <property type="chains" value="SN=1-151"/>
</dbReference>
<dbReference type="PDB" id="6T83">
    <property type="method" value="EM"/>
    <property type="resolution" value="4.00 A"/>
    <property type="chains" value="Nb/o=1-151"/>
</dbReference>
<dbReference type="PDB" id="6TB3">
    <property type="method" value="EM"/>
    <property type="resolution" value="2.80 A"/>
    <property type="chains" value="Y=2-151"/>
</dbReference>
<dbReference type="PDB" id="6TNU">
    <property type="method" value="EM"/>
    <property type="resolution" value="3.10 A"/>
    <property type="chains" value="Y=2-151"/>
</dbReference>
<dbReference type="PDB" id="6WDR">
    <property type="method" value="EM"/>
    <property type="resolution" value="3.70 A"/>
    <property type="chains" value="N=2-151"/>
</dbReference>
<dbReference type="PDB" id="6WOO">
    <property type="method" value="EM"/>
    <property type="resolution" value="2.90 A"/>
    <property type="chains" value="NN=2-151"/>
</dbReference>
<dbReference type="PDB" id="6XIQ">
    <property type="method" value="EM"/>
    <property type="resolution" value="4.20 A"/>
    <property type="chains" value="AD=1-151"/>
</dbReference>
<dbReference type="PDB" id="6XIR">
    <property type="method" value="EM"/>
    <property type="resolution" value="3.20 A"/>
    <property type="chains" value="AD=1-151"/>
</dbReference>
<dbReference type="PDB" id="6Y7C">
    <property type="method" value="EM"/>
    <property type="resolution" value="3.80 A"/>
    <property type="chains" value="N=1-151"/>
</dbReference>
<dbReference type="PDB" id="6Z6J">
    <property type="method" value="EM"/>
    <property type="resolution" value="3.40 A"/>
    <property type="chains" value="SN=1-151"/>
</dbReference>
<dbReference type="PDB" id="6Z6K">
    <property type="method" value="EM"/>
    <property type="resolution" value="3.40 A"/>
    <property type="chains" value="SN=1-151"/>
</dbReference>
<dbReference type="PDB" id="6ZCE">
    <property type="method" value="EM"/>
    <property type="resolution" value="5.30 A"/>
    <property type="chains" value="O=1-151"/>
</dbReference>
<dbReference type="PDB" id="6ZQA">
    <property type="method" value="EM"/>
    <property type="resolution" value="4.40 A"/>
    <property type="chains" value="DN=1-151"/>
</dbReference>
<dbReference type="PDB" id="6ZQB">
    <property type="method" value="EM"/>
    <property type="resolution" value="3.90 A"/>
    <property type="chains" value="DN=1-151"/>
</dbReference>
<dbReference type="PDB" id="6ZQC">
    <property type="method" value="EM"/>
    <property type="resolution" value="3.80 A"/>
    <property type="chains" value="DN=1-151"/>
</dbReference>
<dbReference type="PDB" id="6ZQD">
    <property type="method" value="EM"/>
    <property type="resolution" value="3.80 A"/>
    <property type="chains" value="DN=1-151"/>
</dbReference>
<dbReference type="PDB" id="6ZQE">
    <property type="method" value="EM"/>
    <property type="resolution" value="7.10 A"/>
    <property type="chains" value="DN=1-151"/>
</dbReference>
<dbReference type="PDB" id="6ZQF">
    <property type="method" value="EM"/>
    <property type="resolution" value="4.90 A"/>
    <property type="chains" value="DN=1-151"/>
</dbReference>
<dbReference type="PDB" id="6ZQG">
    <property type="method" value="EM"/>
    <property type="resolution" value="3.50 A"/>
    <property type="chains" value="DN=1-151"/>
</dbReference>
<dbReference type="PDB" id="6ZU9">
    <property type="method" value="EM"/>
    <property type="resolution" value="6.20 A"/>
    <property type="chains" value="Y=1-151"/>
</dbReference>
<dbReference type="PDB" id="6ZVI">
    <property type="method" value="EM"/>
    <property type="resolution" value="3.00 A"/>
    <property type="chains" value="v=2-151"/>
</dbReference>
<dbReference type="PDB" id="7A1G">
    <property type="method" value="EM"/>
    <property type="resolution" value="3.00 A"/>
    <property type="chains" value="Y=2-151"/>
</dbReference>
<dbReference type="PDB" id="7AJT">
    <property type="method" value="EM"/>
    <property type="resolution" value="4.60 A"/>
    <property type="chains" value="DN=1-151"/>
</dbReference>
<dbReference type="PDB" id="7AJU">
    <property type="method" value="EM"/>
    <property type="resolution" value="3.80 A"/>
    <property type="chains" value="DN=1-151"/>
</dbReference>
<dbReference type="PDB" id="7B7D">
    <property type="method" value="EM"/>
    <property type="resolution" value="3.30 A"/>
    <property type="chains" value="Y=2-151"/>
</dbReference>
<dbReference type="PDB" id="7D4I">
    <property type="method" value="EM"/>
    <property type="resolution" value="4.00 A"/>
    <property type="chains" value="SO=1-151"/>
</dbReference>
<dbReference type="PDB" id="7D5S">
    <property type="method" value="EM"/>
    <property type="resolution" value="4.60 A"/>
    <property type="chains" value="SO=1-151"/>
</dbReference>
<dbReference type="PDB" id="7D5T">
    <property type="method" value="EM"/>
    <property type="resolution" value="6.00 A"/>
    <property type="chains" value="SO=1-151"/>
</dbReference>
<dbReference type="PDB" id="7D63">
    <property type="method" value="EM"/>
    <property type="resolution" value="12.30 A"/>
    <property type="chains" value="SO=1-151"/>
</dbReference>
<dbReference type="PDB" id="7MPI">
    <property type="method" value="EM"/>
    <property type="resolution" value="3.05 A"/>
    <property type="chains" value="BN=2-151"/>
</dbReference>
<dbReference type="PDB" id="7MPJ">
    <property type="method" value="EM"/>
    <property type="resolution" value="2.70 A"/>
    <property type="chains" value="BN=2-151"/>
</dbReference>
<dbReference type="PDB" id="7N8B">
    <property type="method" value="EM"/>
    <property type="resolution" value="3.05 A"/>
    <property type="chains" value="BN=2-151"/>
</dbReference>
<dbReference type="PDB" id="7NRC">
    <property type="method" value="EM"/>
    <property type="resolution" value="3.90 A"/>
    <property type="chains" value="SY=2-151"/>
</dbReference>
<dbReference type="PDB" id="7NRD">
    <property type="method" value="EM"/>
    <property type="resolution" value="4.36 A"/>
    <property type="chains" value="SY=2-151"/>
</dbReference>
<dbReference type="PDB" id="7SUK">
    <property type="method" value="EM"/>
    <property type="resolution" value="3.99 A"/>
    <property type="chains" value="NF=28-151"/>
</dbReference>
<dbReference type="PDB" id="7WTL">
    <property type="method" value="EM"/>
    <property type="resolution" value="3.30 A"/>
    <property type="chains" value="SN=1-151"/>
</dbReference>
<dbReference type="PDB" id="7WTM">
    <property type="method" value="EM"/>
    <property type="resolution" value="3.50 A"/>
    <property type="chains" value="SN=1-151"/>
</dbReference>
<dbReference type="PDB" id="7WTN">
    <property type="method" value="EM"/>
    <property type="resolution" value="3.40 A"/>
    <property type="chains" value="SN=1-151"/>
</dbReference>
<dbReference type="PDB" id="7WTO">
    <property type="method" value="EM"/>
    <property type="resolution" value="3.50 A"/>
    <property type="chains" value="SN=1-151"/>
</dbReference>
<dbReference type="PDB" id="7WTP">
    <property type="method" value="EM"/>
    <property type="resolution" value="3.80 A"/>
    <property type="chains" value="SN=1-151"/>
</dbReference>
<dbReference type="PDB" id="7WTQ">
    <property type="method" value="EM"/>
    <property type="resolution" value="3.70 A"/>
    <property type="chains" value="SN=1-151"/>
</dbReference>
<dbReference type="PDB" id="7WTR">
    <property type="method" value="EM"/>
    <property type="resolution" value="3.50 A"/>
    <property type="chains" value="SN=1-151"/>
</dbReference>
<dbReference type="PDB" id="7ZPQ">
    <property type="method" value="EM"/>
    <property type="resolution" value="3.47 A"/>
    <property type="chains" value="AN=2-151"/>
</dbReference>
<dbReference type="PDB" id="7ZRS">
    <property type="method" value="EM"/>
    <property type="resolution" value="4.80 A"/>
    <property type="chains" value="AN=2-151"/>
</dbReference>
<dbReference type="PDB" id="7ZUW">
    <property type="method" value="EM"/>
    <property type="resolution" value="4.30 A"/>
    <property type="chains" value="AN=2-151"/>
</dbReference>
<dbReference type="PDB" id="7ZUX">
    <property type="method" value="EM"/>
    <property type="resolution" value="2.50 A"/>
    <property type="chains" value="DN=2-151"/>
</dbReference>
<dbReference type="PDB" id="7ZW0">
    <property type="method" value="EM"/>
    <property type="resolution" value="2.40 A"/>
    <property type="chains" value="sY=1-151"/>
</dbReference>
<dbReference type="PDB" id="8BN3">
    <property type="method" value="EM"/>
    <property type="resolution" value="2.40 A"/>
    <property type="chains" value="C3=2-151"/>
</dbReference>
<dbReference type="PDB" id="8BQD">
    <property type="method" value="EM"/>
    <property type="resolution" value="3.90 A"/>
    <property type="chains" value="Y=2-151"/>
</dbReference>
<dbReference type="PDB" id="8BQX">
    <property type="method" value="EM"/>
    <property type="resolution" value="3.80 A"/>
    <property type="chains" value="Y=2-151"/>
</dbReference>
<dbReference type="PDB" id="8C00">
    <property type="method" value="EM"/>
    <property type="resolution" value="2.90 A"/>
    <property type="chains" value="Y=1-151"/>
</dbReference>
<dbReference type="PDB" id="8C01">
    <property type="method" value="EM"/>
    <property type="resolution" value="2.70 A"/>
    <property type="chains" value="Y=1-151"/>
</dbReference>
<dbReference type="PDB" id="8C83">
    <property type="method" value="EM"/>
    <property type="resolution" value="3.00 A"/>
    <property type="chains" value="Y=1-151"/>
</dbReference>
<dbReference type="PDB" id="8CAH">
    <property type="method" value="EM"/>
    <property type="resolution" value="3.00 A"/>
    <property type="chains" value="Y=1-151"/>
</dbReference>
<dbReference type="PDB" id="8CAS">
    <property type="method" value="EM"/>
    <property type="resolution" value="3.30 A"/>
    <property type="chains" value="Y=1-151"/>
</dbReference>
<dbReference type="PDB" id="8CBJ">
    <property type="method" value="EM"/>
    <property type="resolution" value="3.80 A"/>
    <property type="chains" value="N=1-151"/>
</dbReference>
<dbReference type="PDB" id="8CCS">
    <property type="method" value="EM"/>
    <property type="resolution" value="1.97 A"/>
    <property type="chains" value="p=1-151"/>
</dbReference>
<dbReference type="PDB" id="8CDL">
    <property type="method" value="EM"/>
    <property type="resolution" value="2.72 A"/>
    <property type="chains" value="p=1-151"/>
</dbReference>
<dbReference type="PDB" id="8CDR">
    <property type="method" value="EM"/>
    <property type="resolution" value="2.04 A"/>
    <property type="chains" value="p=1-151"/>
</dbReference>
<dbReference type="PDB" id="8CEH">
    <property type="method" value="EM"/>
    <property type="resolution" value="2.05 A"/>
    <property type="chains" value="p=1-151"/>
</dbReference>
<dbReference type="PDB" id="8CF5">
    <property type="method" value="EM"/>
    <property type="resolution" value="2.71 A"/>
    <property type="chains" value="p=1-151"/>
</dbReference>
<dbReference type="PDB" id="8CG8">
    <property type="method" value="EM"/>
    <property type="resolution" value="2.57 A"/>
    <property type="chains" value="p=1-151"/>
</dbReference>
<dbReference type="PDB" id="8CGN">
    <property type="method" value="EM"/>
    <property type="resolution" value="2.28 A"/>
    <property type="chains" value="p=1-151"/>
</dbReference>
<dbReference type="PDB" id="8CIV">
    <property type="method" value="EM"/>
    <property type="resolution" value="2.47 A"/>
    <property type="chains" value="p=1-151"/>
</dbReference>
<dbReference type="PDB" id="8CKU">
    <property type="method" value="EM"/>
    <property type="resolution" value="3.11 A"/>
    <property type="chains" value="p=1-151"/>
</dbReference>
<dbReference type="PDB" id="8CMJ">
    <property type="method" value="EM"/>
    <property type="resolution" value="3.79 A"/>
    <property type="chains" value="p=1-151"/>
</dbReference>
<dbReference type="PDB" id="8EUB">
    <property type="method" value="EM"/>
    <property type="resolution" value="2.52 A"/>
    <property type="chains" value="BN=1-151"/>
</dbReference>
<dbReference type="PDB" id="8EVP">
    <property type="method" value="EM"/>
    <property type="resolution" value="2.38 A"/>
    <property type="chains" value="BN=1-151"/>
</dbReference>
<dbReference type="PDB" id="8EVQ">
    <property type="method" value="EM"/>
    <property type="resolution" value="2.72 A"/>
    <property type="chains" value="BN=1-151"/>
</dbReference>
<dbReference type="PDB" id="8EVR">
    <property type="method" value="EM"/>
    <property type="resolution" value="2.87 A"/>
    <property type="chains" value="BN=1-151"/>
</dbReference>
<dbReference type="PDB" id="8EVS">
    <property type="method" value="EM"/>
    <property type="resolution" value="2.62 A"/>
    <property type="chains" value="BN=1-151"/>
</dbReference>
<dbReference type="PDB" id="8EVT">
    <property type="method" value="EM"/>
    <property type="resolution" value="2.20 A"/>
    <property type="chains" value="BN=1-151"/>
</dbReference>
<dbReference type="PDB" id="8EWB">
    <property type="method" value="EM"/>
    <property type="resolution" value="2.87 A"/>
    <property type="chains" value="BN=1-151"/>
</dbReference>
<dbReference type="PDB" id="8EWC">
    <property type="method" value="EM"/>
    <property type="resolution" value="2.45 A"/>
    <property type="chains" value="BN=1-151"/>
</dbReference>
<dbReference type="PDB" id="8K2D">
    <property type="method" value="EM"/>
    <property type="resolution" value="3.20 A"/>
    <property type="chains" value="SN=1-151"/>
</dbReference>
<dbReference type="PDB" id="8K82">
    <property type="method" value="EM"/>
    <property type="resolution" value="3.00 A"/>
    <property type="chains" value="SN=1-151"/>
</dbReference>
<dbReference type="PDB" id="8P4V">
    <property type="method" value="X-ray"/>
    <property type="resolution" value="3.16 A"/>
    <property type="chains" value="O/c3=1-151"/>
</dbReference>
<dbReference type="PDB" id="8P9A">
    <property type="method" value="X-ray"/>
    <property type="resolution" value="2.90 A"/>
    <property type="chains" value="O/c3=1-151"/>
</dbReference>
<dbReference type="PDB" id="8T2X">
    <property type="method" value="EM"/>
    <property type="resolution" value="2.46 A"/>
    <property type="chains" value="BN=1-151"/>
</dbReference>
<dbReference type="PDB" id="8T2Y">
    <property type="method" value="EM"/>
    <property type="resolution" value="2.20 A"/>
    <property type="chains" value="BN=1-151"/>
</dbReference>
<dbReference type="PDB" id="8T2Z">
    <property type="method" value="EM"/>
    <property type="resolution" value="2.40 A"/>
    <property type="chains" value="BN=1-151"/>
</dbReference>
<dbReference type="PDB" id="8T30">
    <property type="method" value="EM"/>
    <property type="resolution" value="2.88 A"/>
    <property type="chains" value="BN=1-151"/>
</dbReference>
<dbReference type="PDB" id="8T3A">
    <property type="method" value="EM"/>
    <property type="resolution" value="2.86 A"/>
    <property type="chains" value="BN=1-151"/>
</dbReference>
<dbReference type="PDB" id="8T3B">
    <property type="method" value="EM"/>
    <property type="resolution" value="3.08 A"/>
    <property type="chains" value="BN=1-151"/>
</dbReference>
<dbReference type="PDB" id="8T3C">
    <property type="method" value="EM"/>
    <property type="resolution" value="3.86 A"/>
    <property type="chains" value="BN=1-151"/>
</dbReference>
<dbReference type="PDB" id="8T3D">
    <property type="method" value="EM"/>
    <property type="resolution" value="2.95 A"/>
    <property type="chains" value="BN=1-151"/>
</dbReference>
<dbReference type="PDB" id="8T3E">
    <property type="method" value="EM"/>
    <property type="resolution" value="3.04 A"/>
    <property type="chains" value="BN=1-151"/>
</dbReference>
<dbReference type="PDB" id="8T3F">
    <property type="method" value="EM"/>
    <property type="resolution" value="3.09 A"/>
    <property type="chains" value="BN=1-151"/>
</dbReference>
<dbReference type="PDB" id="8UT0">
    <property type="method" value="EM"/>
    <property type="resolution" value="3.22 A"/>
    <property type="chains" value="SY=2-151"/>
</dbReference>
<dbReference type="PDB" id="8UTI">
    <property type="method" value="EM"/>
    <property type="resolution" value="3.13 A"/>
    <property type="chains" value="SY=2-151"/>
</dbReference>
<dbReference type="PDB" id="8XU8">
    <property type="method" value="EM"/>
    <property type="resolution" value="3.40 A"/>
    <property type="chains" value="SY=2-151"/>
</dbReference>
<dbReference type="PDB" id="8Y0U">
    <property type="method" value="EM"/>
    <property type="resolution" value="3.59 A"/>
    <property type="chains" value="SN=1-151"/>
</dbReference>
<dbReference type="PDB" id="8YLD">
    <property type="method" value="EM"/>
    <property type="resolution" value="3.90 A"/>
    <property type="chains" value="SY=2-151"/>
</dbReference>
<dbReference type="PDB" id="8YLR">
    <property type="method" value="EM"/>
    <property type="resolution" value="3.90 A"/>
    <property type="chains" value="SY=2-151"/>
</dbReference>
<dbReference type="PDB" id="8Z70">
    <property type="method" value="EM"/>
    <property type="resolution" value="3.20 A"/>
    <property type="chains" value="SY=2-151"/>
</dbReference>
<dbReference type="PDB" id="8Z71">
    <property type="method" value="EM"/>
    <property type="resolution" value="3.60 A"/>
    <property type="chains" value="SY=2-151"/>
</dbReference>
<dbReference type="PDB" id="9F9S">
    <property type="method" value="EM"/>
    <property type="resolution" value="2.90 A"/>
    <property type="chains" value="Rn/Sn=1-151"/>
</dbReference>
<dbReference type="PDBsum" id="3J6X"/>
<dbReference type="PDBsum" id="3J6Y"/>
<dbReference type="PDBsum" id="3J77"/>
<dbReference type="PDBsum" id="3J78"/>
<dbReference type="PDBsum" id="4U3M"/>
<dbReference type="PDBsum" id="4U3N"/>
<dbReference type="PDBsum" id="4U3U"/>
<dbReference type="PDBsum" id="4U4N"/>
<dbReference type="PDBsum" id="4U4O"/>
<dbReference type="PDBsum" id="4U4Q"/>
<dbReference type="PDBsum" id="4U4R"/>
<dbReference type="PDBsum" id="4U4U"/>
<dbReference type="PDBsum" id="4U4Y"/>
<dbReference type="PDBsum" id="4U4Z"/>
<dbReference type="PDBsum" id="4U50"/>
<dbReference type="PDBsum" id="4U51"/>
<dbReference type="PDBsum" id="4U52"/>
<dbReference type="PDBsum" id="4U53"/>
<dbReference type="PDBsum" id="4U55"/>
<dbReference type="PDBsum" id="4U56"/>
<dbReference type="PDBsum" id="4U6F"/>
<dbReference type="PDBsum" id="4V4B"/>
<dbReference type="PDBsum" id="4V5Z"/>
<dbReference type="PDBsum" id="4V6I"/>
<dbReference type="PDBsum" id="4V7R"/>
<dbReference type="PDBsum" id="4V88"/>
<dbReference type="PDBsum" id="4V8Y"/>
<dbReference type="PDBsum" id="4V8Z"/>
<dbReference type="PDBsum" id="4V92"/>
<dbReference type="PDBsum" id="5DAT"/>
<dbReference type="PDBsum" id="5DC3"/>
<dbReference type="PDBsum" id="5DGE"/>
<dbReference type="PDBsum" id="5DGF"/>
<dbReference type="PDBsum" id="5DGV"/>
<dbReference type="PDBsum" id="5FCI"/>
<dbReference type="PDBsum" id="5FCJ"/>
<dbReference type="PDBsum" id="5I4L"/>
<dbReference type="PDBsum" id="5JPQ"/>
<dbReference type="PDBsum" id="5JUO"/>
<dbReference type="PDBsum" id="5JUP"/>
<dbReference type="PDBsum" id="5JUS"/>
<dbReference type="PDBsum" id="5JUT"/>
<dbReference type="PDBsum" id="5JUU"/>
<dbReference type="PDBsum" id="5LL6"/>
<dbReference type="PDBsum" id="5LYB"/>
<dbReference type="PDBsum" id="5M1J"/>
<dbReference type="PDBsum" id="5MC6"/>
<dbReference type="PDBsum" id="5MEI"/>
<dbReference type="PDBsum" id="5NDG"/>
<dbReference type="PDBsum" id="5NDV"/>
<dbReference type="PDBsum" id="5NDW"/>
<dbReference type="PDBsum" id="5OBM"/>
<dbReference type="PDBsum" id="5ON6"/>
<dbReference type="PDBsum" id="5TBW"/>
<dbReference type="PDBsum" id="5TGA"/>
<dbReference type="PDBsum" id="5TGM"/>
<dbReference type="PDBsum" id="5WLC"/>
<dbReference type="PDBsum" id="5WYJ"/>
<dbReference type="PDBsum" id="5WYK"/>
<dbReference type="PDBsum" id="6EML"/>
<dbReference type="PDBsum" id="6FAI"/>
<dbReference type="PDBsum" id="6GQ1"/>
<dbReference type="PDBsum" id="6GQB"/>
<dbReference type="PDBsum" id="6GQV"/>
<dbReference type="PDBsum" id="6HHQ"/>
<dbReference type="PDBsum" id="6I7O"/>
<dbReference type="PDBsum" id="6KE6"/>
<dbReference type="PDBsum" id="6LQP"/>
<dbReference type="PDBsum" id="6LQQ"/>
<dbReference type="PDBsum" id="6LQR"/>
<dbReference type="PDBsum" id="6LQS"/>
<dbReference type="PDBsum" id="6LQT"/>
<dbReference type="PDBsum" id="6LQU"/>
<dbReference type="PDBsum" id="6Q8Y"/>
<dbReference type="PDBsum" id="6RBD"/>
<dbReference type="PDBsum" id="6RBE"/>
<dbReference type="PDBsum" id="6S47"/>
<dbReference type="PDBsum" id="6SNT"/>
<dbReference type="PDBsum" id="6SV4"/>
<dbReference type="PDBsum" id="6T4Q"/>
<dbReference type="PDBsum" id="6T7I"/>
<dbReference type="PDBsum" id="6T7T"/>
<dbReference type="PDBsum" id="6T83"/>
<dbReference type="PDBsum" id="6TB3"/>
<dbReference type="PDBsum" id="6TNU"/>
<dbReference type="PDBsum" id="6WDR"/>
<dbReference type="PDBsum" id="6WOO"/>
<dbReference type="PDBsum" id="6XIQ"/>
<dbReference type="PDBsum" id="6XIR"/>
<dbReference type="PDBsum" id="6Y7C"/>
<dbReference type="PDBsum" id="6Z6J"/>
<dbReference type="PDBsum" id="6Z6K"/>
<dbReference type="PDBsum" id="6ZCE"/>
<dbReference type="PDBsum" id="6ZQA"/>
<dbReference type="PDBsum" id="6ZQB"/>
<dbReference type="PDBsum" id="6ZQC"/>
<dbReference type="PDBsum" id="6ZQD"/>
<dbReference type="PDBsum" id="6ZQE"/>
<dbReference type="PDBsum" id="6ZQF"/>
<dbReference type="PDBsum" id="6ZQG"/>
<dbReference type="PDBsum" id="6ZU9"/>
<dbReference type="PDBsum" id="6ZVI"/>
<dbReference type="PDBsum" id="7A1G"/>
<dbReference type="PDBsum" id="7AJT"/>
<dbReference type="PDBsum" id="7AJU"/>
<dbReference type="PDBsum" id="7B7D"/>
<dbReference type="PDBsum" id="7D4I"/>
<dbReference type="PDBsum" id="7D5S"/>
<dbReference type="PDBsum" id="7D5T"/>
<dbReference type="PDBsum" id="7D63"/>
<dbReference type="PDBsum" id="7MPI"/>
<dbReference type="PDBsum" id="7MPJ"/>
<dbReference type="PDBsum" id="7N8B"/>
<dbReference type="PDBsum" id="7NRC"/>
<dbReference type="PDBsum" id="7NRD"/>
<dbReference type="PDBsum" id="7SUK"/>
<dbReference type="PDBsum" id="7WTL"/>
<dbReference type="PDBsum" id="7WTM"/>
<dbReference type="PDBsum" id="7WTN"/>
<dbReference type="PDBsum" id="7WTO"/>
<dbReference type="PDBsum" id="7WTP"/>
<dbReference type="PDBsum" id="7WTQ"/>
<dbReference type="PDBsum" id="7WTR"/>
<dbReference type="PDBsum" id="7ZPQ"/>
<dbReference type="PDBsum" id="7ZRS"/>
<dbReference type="PDBsum" id="7ZUW"/>
<dbReference type="PDBsum" id="7ZUX"/>
<dbReference type="PDBsum" id="7ZW0"/>
<dbReference type="PDBsum" id="8BN3"/>
<dbReference type="PDBsum" id="8BQD"/>
<dbReference type="PDBsum" id="8BQX"/>
<dbReference type="PDBsum" id="8C00"/>
<dbReference type="PDBsum" id="8C01"/>
<dbReference type="PDBsum" id="8C83"/>
<dbReference type="PDBsum" id="8CAH"/>
<dbReference type="PDBsum" id="8CAS"/>
<dbReference type="PDBsum" id="8CBJ"/>
<dbReference type="PDBsum" id="8CCS"/>
<dbReference type="PDBsum" id="8CDL"/>
<dbReference type="PDBsum" id="8CDR"/>
<dbReference type="PDBsum" id="8CEH"/>
<dbReference type="PDBsum" id="8CF5"/>
<dbReference type="PDBsum" id="8CG8"/>
<dbReference type="PDBsum" id="8CGN"/>
<dbReference type="PDBsum" id="8CIV"/>
<dbReference type="PDBsum" id="8CKU"/>
<dbReference type="PDBsum" id="8CMJ"/>
<dbReference type="PDBsum" id="8EUB"/>
<dbReference type="PDBsum" id="8EVP"/>
<dbReference type="PDBsum" id="8EVQ"/>
<dbReference type="PDBsum" id="8EVR"/>
<dbReference type="PDBsum" id="8EVS"/>
<dbReference type="PDBsum" id="8EVT"/>
<dbReference type="PDBsum" id="8EWB"/>
<dbReference type="PDBsum" id="8EWC"/>
<dbReference type="PDBsum" id="8K2D"/>
<dbReference type="PDBsum" id="8K82"/>
<dbReference type="PDBsum" id="8P4V"/>
<dbReference type="PDBsum" id="8P9A"/>
<dbReference type="PDBsum" id="8T2X"/>
<dbReference type="PDBsum" id="8T2Y"/>
<dbReference type="PDBsum" id="8T2Z"/>
<dbReference type="PDBsum" id="8T30"/>
<dbReference type="PDBsum" id="8T3A"/>
<dbReference type="PDBsum" id="8T3B"/>
<dbReference type="PDBsum" id="8T3C"/>
<dbReference type="PDBsum" id="8T3D"/>
<dbReference type="PDBsum" id="8T3E"/>
<dbReference type="PDBsum" id="8T3F"/>
<dbReference type="PDBsum" id="8UT0"/>
<dbReference type="PDBsum" id="8UTI"/>
<dbReference type="PDBsum" id="8XU8"/>
<dbReference type="PDBsum" id="8Y0U"/>
<dbReference type="PDBsum" id="8YLD"/>
<dbReference type="PDBsum" id="8YLR"/>
<dbReference type="PDBsum" id="8Z70"/>
<dbReference type="PDBsum" id="8Z71"/>
<dbReference type="PDBsum" id="9F9S"/>
<dbReference type="EMDB" id="EMD-0949"/>
<dbReference type="EMDB" id="EMD-0950"/>
<dbReference type="EMDB" id="EMD-0951"/>
<dbReference type="EMDB" id="EMD-0952"/>
<dbReference type="EMDB" id="EMD-0953"/>
<dbReference type="EMDB" id="EMD-0954"/>
<dbReference type="EMDB" id="EMD-10315"/>
<dbReference type="EMDB" id="EMD-10377"/>
<dbReference type="EMDB" id="EMD-10396"/>
<dbReference type="EMDB" id="EMD-10397"/>
<dbReference type="EMDB" id="EMD-10398"/>
<dbReference type="EMDB" id="EMD-10431"/>
<dbReference type="EMDB" id="EMD-10537"/>
<dbReference type="EMDB" id="EMD-10713"/>
<dbReference type="EMDB" id="EMD-11096"/>
<dbReference type="EMDB" id="EMD-11097"/>
<dbReference type="EMDB" id="EMD-11357"/>
<dbReference type="EMDB" id="EMD-11358"/>
<dbReference type="EMDB" id="EMD-11359"/>
<dbReference type="EMDB" id="EMD-11360"/>
<dbReference type="EMDB" id="EMD-11361"/>
<dbReference type="EMDB" id="EMD-11362"/>
<dbReference type="EMDB" id="EMD-11363"/>
<dbReference type="EMDB" id="EMD-11439"/>
<dbReference type="EMDB" id="EMD-11457"/>
<dbReference type="EMDB" id="EMD-11608"/>
<dbReference type="EMDB" id="EMD-11807"/>
<dbReference type="EMDB" id="EMD-11808"/>
<dbReference type="EMDB" id="EMD-14861"/>
<dbReference type="EMDB" id="EMD-14921"/>
<dbReference type="EMDB" id="EMD-14978"/>
<dbReference type="EMDB" id="EMD-14979"/>
<dbReference type="EMDB" id="EMD-14990"/>
<dbReference type="EMDB" id="EMD-16127"/>
<dbReference type="EMDB" id="EMD-16182"/>
<dbReference type="EMDB" id="EMD-16347"/>
<dbReference type="EMDB" id="EMD-16349"/>
<dbReference type="EMDB" id="EMD-16470"/>
<dbReference type="EMDB" id="EMD-16533"/>
<dbReference type="EMDB" id="EMD-16541"/>
<dbReference type="EMDB" id="EMD-16563"/>
<dbReference type="EMDB" id="EMD-16591"/>
<dbReference type="EMDB" id="EMD-16594"/>
<dbReference type="EMDB" id="EMD-16609"/>
<dbReference type="EMDB" id="EMD-16616"/>
<dbReference type="EMDB" id="EMD-16634"/>
<dbReference type="EMDB" id="EMD-16648"/>
<dbReference type="EMDB" id="EMD-16684"/>
<dbReference type="EMDB" id="EMD-16702"/>
<dbReference type="EMDB" id="EMD-16729"/>
<dbReference type="EMDB" id="EMD-21644"/>
<dbReference type="EMDB" id="EMD-21859"/>
<dbReference type="EMDB" id="EMD-22196"/>
<dbReference type="EMDB" id="EMD-22198"/>
<dbReference type="EMDB" id="EMD-23934"/>
<dbReference type="EMDB" id="EMD-23935"/>
<dbReference type="EMDB" id="EMD-24235"/>
<dbReference type="EMDB" id="EMD-25441"/>
<dbReference type="EMDB" id="EMD-28610"/>
<dbReference type="EMDB" id="EMD-28632"/>
<dbReference type="EMDB" id="EMD-28633"/>
<dbReference type="EMDB" id="EMD-28634"/>
<dbReference type="EMDB" id="EMD-28635"/>
<dbReference type="EMDB" id="EMD-28636"/>
<dbReference type="EMDB" id="EMD-28642"/>
<dbReference type="EMDB" id="EMD-28643"/>
<dbReference type="EMDB" id="EMD-30574"/>
<dbReference type="EMDB" id="EMD-30584"/>
<dbReference type="EMDB" id="EMD-30585"/>
<dbReference type="EMDB" id="EMD-30588"/>
<dbReference type="EMDB" id="EMD-32790"/>
<dbReference type="EMDB" id="EMD-32791"/>
<dbReference type="EMDB" id="EMD-32792"/>
<dbReference type="EMDB" id="EMD-32793"/>
<dbReference type="EMDB" id="EMD-32794"/>
<dbReference type="EMDB" id="EMD-32795"/>
<dbReference type="EMDB" id="EMD-32796"/>
<dbReference type="EMDB" id="EMD-36839"/>
<dbReference type="EMDB" id="EMD-36945"/>
<dbReference type="EMDB" id="EMD-38660"/>
<dbReference type="EMDB" id="EMD-40990"/>
<dbReference type="EMDB" id="EMD-40991"/>
<dbReference type="EMDB" id="EMD-40992"/>
<dbReference type="EMDB" id="EMD-40993"/>
<dbReference type="EMDB" id="EMD-40997"/>
<dbReference type="EMDB" id="EMD-40998"/>
<dbReference type="EMDB" id="EMD-40999"/>
<dbReference type="EMDB" id="EMD-41000"/>
<dbReference type="EMDB" id="EMD-41001"/>
<dbReference type="EMDB" id="EMD-41002"/>
<dbReference type="EMDB" id="EMD-4140"/>
<dbReference type="EMDB" id="EMD-4214"/>
<dbReference type="EMDB" id="EMD-42525"/>
<dbReference type="EMDB" id="EMD-42540"/>
<dbReference type="EMDB" id="EMD-4427"/>
<dbReference type="EMDB" id="EMD-4474"/>
<dbReference type="EMDB" id="EMD-4792"/>
<dbReference type="EMDB" id="EMD-4793"/>
<dbReference type="EMDB" id="EMD-50259"/>
<dbReference type="EMDB" id="EMD-8859"/>
<dbReference type="EMDB" id="EMD-9964"/>
<dbReference type="SMR" id="P05756"/>
<dbReference type="BioGRID" id="32119">
    <property type="interactions" value="704"/>
</dbReference>
<dbReference type="ComplexPortal" id="CPX-1599">
    <property type="entry name" value="40S cytosolic small ribosomal subunit"/>
</dbReference>
<dbReference type="FunCoup" id="P05756">
    <property type="interactions" value="1226"/>
</dbReference>
<dbReference type="IntAct" id="P05756">
    <property type="interactions" value="115"/>
</dbReference>
<dbReference type="MINT" id="P05756"/>
<dbReference type="STRING" id="4932.YDR064W"/>
<dbReference type="iPTMnet" id="P05756"/>
<dbReference type="PaxDb" id="4932-YDR064W"/>
<dbReference type="PeptideAtlas" id="P05756"/>
<dbReference type="TopDownProteomics" id="P05756"/>
<dbReference type="EnsemblFungi" id="YDR064W_mRNA">
    <property type="protein sequence ID" value="YDR064W"/>
    <property type="gene ID" value="YDR064W"/>
</dbReference>
<dbReference type="GeneID" id="851636"/>
<dbReference type="KEGG" id="sce:YDR064W"/>
<dbReference type="AGR" id="SGD:S000002471"/>
<dbReference type="SGD" id="S000002471">
    <property type="gene designation" value="RPS13"/>
</dbReference>
<dbReference type="VEuPathDB" id="FungiDB:YDR064W"/>
<dbReference type="eggNOG" id="KOG0400">
    <property type="taxonomic scope" value="Eukaryota"/>
</dbReference>
<dbReference type="GeneTree" id="ENSGT00390000017491"/>
<dbReference type="HOGENOM" id="CLU_090139_1_0_1"/>
<dbReference type="InParanoid" id="P05756"/>
<dbReference type="OMA" id="MHTRRKG"/>
<dbReference type="OrthoDB" id="623277at2759"/>
<dbReference type="BioCyc" id="YEAST:G3O-29671-MONOMER"/>
<dbReference type="Reactome" id="R-SCE-156827">
    <property type="pathway name" value="L13a-mediated translational silencing of Ceruloplasmin expression"/>
</dbReference>
<dbReference type="Reactome" id="R-SCE-1799339">
    <property type="pathway name" value="SRP-dependent cotranslational protein targeting to membrane"/>
</dbReference>
<dbReference type="Reactome" id="R-SCE-72649">
    <property type="pathway name" value="Translation initiation complex formation"/>
</dbReference>
<dbReference type="Reactome" id="R-SCE-72689">
    <property type="pathway name" value="Formation of a pool of free 40S subunits"/>
</dbReference>
<dbReference type="Reactome" id="R-SCE-72695">
    <property type="pathway name" value="Formation of the ternary complex, and subsequently, the 43S complex"/>
</dbReference>
<dbReference type="Reactome" id="R-SCE-72702">
    <property type="pathway name" value="Ribosomal scanning and start codon recognition"/>
</dbReference>
<dbReference type="Reactome" id="R-SCE-72706">
    <property type="pathway name" value="GTP hydrolysis and joining of the 60S ribosomal subunit"/>
</dbReference>
<dbReference type="Reactome" id="R-SCE-975956">
    <property type="pathway name" value="Nonsense Mediated Decay (NMD) independent of the Exon Junction Complex (EJC)"/>
</dbReference>
<dbReference type="Reactome" id="R-SCE-975957">
    <property type="pathway name" value="Nonsense Mediated Decay (NMD) enhanced by the Exon Junction Complex (EJC)"/>
</dbReference>
<dbReference type="BioGRID-ORCS" id="851636">
    <property type="hits" value="3 hits in 10 CRISPR screens"/>
</dbReference>
<dbReference type="PRO" id="PR:P05756"/>
<dbReference type="Proteomes" id="UP000002311">
    <property type="component" value="Chromosome IV"/>
</dbReference>
<dbReference type="RNAct" id="P05756">
    <property type="molecule type" value="protein"/>
</dbReference>
<dbReference type="GO" id="GO:0030686">
    <property type="term" value="C:90S preribosome"/>
    <property type="evidence" value="ECO:0007005"/>
    <property type="project" value="SGD"/>
</dbReference>
<dbReference type="GO" id="GO:0005737">
    <property type="term" value="C:cytoplasm"/>
    <property type="evidence" value="ECO:0000314"/>
    <property type="project" value="ComplexPortal"/>
</dbReference>
<dbReference type="GO" id="GO:0005829">
    <property type="term" value="C:cytosol"/>
    <property type="evidence" value="ECO:0000304"/>
    <property type="project" value="Reactome"/>
</dbReference>
<dbReference type="GO" id="GO:0022627">
    <property type="term" value="C:cytosolic small ribosomal subunit"/>
    <property type="evidence" value="ECO:0000314"/>
    <property type="project" value="SGD"/>
</dbReference>
<dbReference type="GO" id="GO:0005730">
    <property type="term" value="C:nucleolus"/>
    <property type="evidence" value="ECO:0000318"/>
    <property type="project" value="GO_Central"/>
</dbReference>
<dbReference type="GO" id="GO:0070181">
    <property type="term" value="F:small ribosomal subunit rRNA binding"/>
    <property type="evidence" value="ECO:0000314"/>
    <property type="project" value="SGD"/>
</dbReference>
<dbReference type="GO" id="GO:0003735">
    <property type="term" value="F:structural constituent of ribosome"/>
    <property type="evidence" value="ECO:0000314"/>
    <property type="project" value="SGD"/>
</dbReference>
<dbReference type="GO" id="GO:0002181">
    <property type="term" value="P:cytoplasmic translation"/>
    <property type="evidence" value="ECO:0000303"/>
    <property type="project" value="ComplexPortal"/>
</dbReference>
<dbReference type="GO" id="GO:0000462">
    <property type="term" value="P:maturation of SSU-rRNA from tricistronic rRNA transcript (SSU-rRNA, 5.8S rRNA, LSU-rRNA)"/>
    <property type="evidence" value="ECO:0000315"/>
    <property type="project" value="SGD"/>
</dbReference>
<dbReference type="CDD" id="cd00353">
    <property type="entry name" value="Ribosomal_S15p_S13e"/>
    <property type="match status" value="1"/>
</dbReference>
<dbReference type="FunFam" id="1.10.287.10:FF:000003">
    <property type="entry name" value="40S ribosomal protein S13"/>
    <property type="match status" value="1"/>
</dbReference>
<dbReference type="FunFam" id="4.10.860.130:FF:000001">
    <property type="entry name" value="40S ribosomal protein S13"/>
    <property type="match status" value="1"/>
</dbReference>
<dbReference type="Gene3D" id="4.10.860.130">
    <property type="match status" value="1"/>
</dbReference>
<dbReference type="Gene3D" id="1.10.287.10">
    <property type="entry name" value="S15/NS1, RNA-binding"/>
    <property type="match status" value="1"/>
</dbReference>
<dbReference type="HAMAP" id="MF_01343_A">
    <property type="entry name" value="Ribosomal_uS15_A"/>
    <property type="match status" value="1"/>
</dbReference>
<dbReference type="InterPro" id="IPR000589">
    <property type="entry name" value="Ribosomal_uS15"/>
</dbReference>
<dbReference type="InterPro" id="IPR023029">
    <property type="entry name" value="Ribosomal_uS15_arc_euk"/>
</dbReference>
<dbReference type="InterPro" id="IPR012606">
    <property type="entry name" value="Ribosomal_uS15_N"/>
</dbReference>
<dbReference type="InterPro" id="IPR009068">
    <property type="entry name" value="uS15_NS1_RNA-bd_sf"/>
</dbReference>
<dbReference type="NCBIfam" id="NF006331">
    <property type="entry name" value="PRK08561.1"/>
    <property type="match status" value="1"/>
</dbReference>
<dbReference type="PANTHER" id="PTHR11885">
    <property type="entry name" value="RIBOSOMAL PROTEIN S15P/S13E"/>
    <property type="match status" value="1"/>
</dbReference>
<dbReference type="PANTHER" id="PTHR11885:SF6">
    <property type="entry name" value="SMALL RIBOSOMAL SUBUNIT PROTEIN US15"/>
    <property type="match status" value="1"/>
</dbReference>
<dbReference type="Pfam" id="PF08069">
    <property type="entry name" value="Ribosomal_S13_N"/>
    <property type="match status" value="1"/>
</dbReference>
<dbReference type="Pfam" id="PF00312">
    <property type="entry name" value="Ribosomal_S15"/>
    <property type="match status" value="1"/>
</dbReference>
<dbReference type="SMART" id="SM01386">
    <property type="entry name" value="Ribosomal_S13_N"/>
    <property type="match status" value="1"/>
</dbReference>
<dbReference type="SMART" id="SM01387">
    <property type="entry name" value="Ribosomal_S15"/>
    <property type="match status" value="1"/>
</dbReference>
<dbReference type="SUPFAM" id="SSF47060">
    <property type="entry name" value="S15/NS1 RNA-binding domain"/>
    <property type="match status" value="1"/>
</dbReference>
<dbReference type="PROSITE" id="PS00362">
    <property type="entry name" value="RIBOSOMAL_S15"/>
    <property type="match status" value="1"/>
</dbReference>
<proteinExistence type="evidence at protein level"/>
<organism>
    <name type="scientific">Saccharomyces cerevisiae (strain ATCC 204508 / S288c)</name>
    <name type="common">Baker's yeast</name>
    <dbReference type="NCBI Taxonomy" id="559292"/>
    <lineage>
        <taxon>Eukaryota</taxon>
        <taxon>Fungi</taxon>
        <taxon>Dikarya</taxon>
        <taxon>Ascomycota</taxon>
        <taxon>Saccharomycotina</taxon>
        <taxon>Saccharomycetes</taxon>
        <taxon>Saccharomycetales</taxon>
        <taxon>Saccharomycetaceae</taxon>
        <taxon>Saccharomyces</taxon>
    </lineage>
</organism>
<reference key="1">
    <citation type="journal article" date="1996" name="Yeast">
        <title>Nucleotide sequence analysis of a 32,500 bp region of the right arm of Saccharomyces cerevisiae chromosome IV.</title>
        <authorList>
            <person name="Brandt P."/>
            <person name="Ramlow S."/>
            <person name="Otto B."/>
            <person name="Bloecker H."/>
        </authorList>
    </citation>
    <scope>NUCLEOTIDE SEQUENCE [GENOMIC DNA]</scope>
    <source>
        <strain>ATCC 204508 / S288c</strain>
    </source>
</reference>
<reference key="2">
    <citation type="journal article" date="1997" name="Nature">
        <title>The nucleotide sequence of Saccharomyces cerevisiae chromosome IV.</title>
        <authorList>
            <person name="Jacq C."/>
            <person name="Alt-Moerbe J."/>
            <person name="Andre B."/>
            <person name="Arnold W."/>
            <person name="Bahr A."/>
            <person name="Ballesta J.P.G."/>
            <person name="Bargues M."/>
            <person name="Baron L."/>
            <person name="Becker A."/>
            <person name="Biteau N."/>
            <person name="Bloecker H."/>
            <person name="Blugeon C."/>
            <person name="Boskovic J."/>
            <person name="Brandt P."/>
            <person name="Brueckner M."/>
            <person name="Buitrago M.J."/>
            <person name="Coster F."/>
            <person name="Delaveau T."/>
            <person name="del Rey F."/>
            <person name="Dujon B."/>
            <person name="Eide L.G."/>
            <person name="Garcia-Cantalejo J.M."/>
            <person name="Goffeau A."/>
            <person name="Gomez-Peris A."/>
            <person name="Granotier C."/>
            <person name="Hanemann V."/>
            <person name="Hankeln T."/>
            <person name="Hoheisel J.D."/>
            <person name="Jaeger W."/>
            <person name="Jimenez A."/>
            <person name="Jonniaux J.-L."/>
            <person name="Kraemer C."/>
            <person name="Kuester H."/>
            <person name="Laamanen P."/>
            <person name="Legros Y."/>
            <person name="Louis E.J."/>
            <person name="Moeller-Rieker S."/>
            <person name="Monnet A."/>
            <person name="Moro M."/>
            <person name="Mueller-Auer S."/>
            <person name="Nussbaumer B."/>
            <person name="Paricio N."/>
            <person name="Paulin L."/>
            <person name="Perea J."/>
            <person name="Perez-Alonso M."/>
            <person name="Perez-Ortin J.E."/>
            <person name="Pohl T.M."/>
            <person name="Prydz H."/>
            <person name="Purnelle B."/>
            <person name="Rasmussen S.W."/>
            <person name="Remacha M.A."/>
            <person name="Revuelta J.L."/>
            <person name="Rieger M."/>
            <person name="Salom D."/>
            <person name="Saluz H.P."/>
            <person name="Saiz J.E."/>
            <person name="Saren A.-M."/>
            <person name="Schaefer M."/>
            <person name="Scharfe M."/>
            <person name="Schmidt E.R."/>
            <person name="Schneider C."/>
            <person name="Scholler P."/>
            <person name="Schwarz S."/>
            <person name="Soler-Mira A."/>
            <person name="Urrestarazu L.A."/>
            <person name="Verhasselt P."/>
            <person name="Vissers S."/>
            <person name="Voet M."/>
            <person name="Volckaert G."/>
            <person name="Wagner G."/>
            <person name="Wambutt R."/>
            <person name="Wedler E."/>
            <person name="Wedler H."/>
            <person name="Woelfl S."/>
            <person name="Harris D.E."/>
            <person name="Bowman S."/>
            <person name="Brown D."/>
            <person name="Churcher C.M."/>
            <person name="Connor R."/>
            <person name="Dedman K."/>
            <person name="Gentles S."/>
            <person name="Hamlin N."/>
            <person name="Hunt S."/>
            <person name="Jones L."/>
            <person name="McDonald S."/>
            <person name="Murphy L.D."/>
            <person name="Niblett D."/>
            <person name="Odell C."/>
            <person name="Oliver K."/>
            <person name="Rajandream M.A."/>
            <person name="Richards C."/>
            <person name="Shore L."/>
            <person name="Walsh S.V."/>
            <person name="Barrell B.G."/>
            <person name="Dietrich F.S."/>
            <person name="Mulligan J.T."/>
            <person name="Allen E."/>
            <person name="Araujo R."/>
            <person name="Aviles E."/>
            <person name="Berno A."/>
            <person name="Carpenter J."/>
            <person name="Chen E."/>
            <person name="Cherry J.M."/>
            <person name="Chung E."/>
            <person name="Duncan M."/>
            <person name="Hunicke-Smith S."/>
            <person name="Hyman R.W."/>
            <person name="Komp C."/>
            <person name="Lashkari D."/>
            <person name="Lew H."/>
            <person name="Lin D."/>
            <person name="Mosedale D."/>
            <person name="Nakahara K."/>
            <person name="Namath A."/>
            <person name="Oefner P."/>
            <person name="Oh C."/>
            <person name="Petel F.X."/>
            <person name="Roberts D."/>
            <person name="Schramm S."/>
            <person name="Schroeder M."/>
            <person name="Shogren T."/>
            <person name="Shroff N."/>
            <person name="Winant A."/>
            <person name="Yelton M.A."/>
            <person name="Botstein D."/>
            <person name="Davis R.W."/>
            <person name="Johnston M."/>
            <person name="Andrews S."/>
            <person name="Brinkman R."/>
            <person name="Cooper J."/>
            <person name="Ding H."/>
            <person name="Du Z."/>
            <person name="Favello A."/>
            <person name="Fulton L."/>
            <person name="Gattung S."/>
            <person name="Greco T."/>
            <person name="Hallsworth K."/>
            <person name="Hawkins J."/>
            <person name="Hillier L.W."/>
            <person name="Jier M."/>
            <person name="Johnson D."/>
            <person name="Johnston L."/>
            <person name="Kirsten J."/>
            <person name="Kucaba T."/>
            <person name="Langston Y."/>
            <person name="Latreille P."/>
            <person name="Le T."/>
            <person name="Mardis E."/>
            <person name="Menezes S."/>
            <person name="Miller N."/>
            <person name="Nhan M."/>
            <person name="Pauley A."/>
            <person name="Peluso D."/>
            <person name="Rifkin L."/>
            <person name="Riles L."/>
            <person name="Taich A."/>
            <person name="Trevaskis E."/>
            <person name="Vignati D."/>
            <person name="Wilcox L."/>
            <person name="Wohldman P."/>
            <person name="Vaudin M."/>
            <person name="Wilson R."/>
            <person name="Waterston R."/>
            <person name="Albermann K."/>
            <person name="Hani J."/>
            <person name="Heumann K."/>
            <person name="Kleine K."/>
            <person name="Mewes H.-W."/>
            <person name="Zollner A."/>
            <person name="Zaccaria P."/>
        </authorList>
    </citation>
    <scope>NUCLEOTIDE SEQUENCE [LARGE SCALE GENOMIC DNA]</scope>
    <source>
        <strain>ATCC 204508 / S288c</strain>
    </source>
</reference>
<reference key="3">
    <citation type="journal article" date="2014" name="G3 (Bethesda)">
        <title>The reference genome sequence of Saccharomyces cerevisiae: Then and now.</title>
        <authorList>
            <person name="Engel S.R."/>
            <person name="Dietrich F.S."/>
            <person name="Fisk D.G."/>
            <person name="Binkley G."/>
            <person name="Balakrishnan R."/>
            <person name="Costanzo M.C."/>
            <person name="Dwight S.S."/>
            <person name="Hitz B.C."/>
            <person name="Karra K."/>
            <person name="Nash R.S."/>
            <person name="Weng S."/>
            <person name="Wong E.D."/>
            <person name="Lloyd P."/>
            <person name="Skrzypek M.S."/>
            <person name="Miyasato S.R."/>
            <person name="Simison M."/>
            <person name="Cherry J.M."/>
        </authorList>
    </citation>
    <scope>GENOME REANNOTATION</scope>
    <source>
        <strain>ATCC 204508 / S288c</strain>
    </source>
</reference>
<reference key="4">
    <citation type="journal article" date="1982" name="Biochemistry">
        <title>Isolation of seventeen proteins and amino-terminal amino acid sequences of eight proteins from cytoplasmic ribosomes of yeast.</title>
        <authorList>
            <person name="Otaka E."/>
            <person name="Higo K."/>
            <person name="Osawa S."/>
        </authorList>
    </citation>
    <scope>PROTEIN SEQUENCE OF 2-41</scope>
</reference>
<reference key="5">
    <citation type="journal article" date="1998" name="Yeast">
        <title>The list of cytoplasmic ribosomal proteins of Saccharomyces cerevisiae.</title>
        <authorList>
            <person name="Planta R.J."/>
            <person name="Mager W.H."/>
        </authorList>
    </citation>
    <scope>NOMENCLATURE</scope>
    <scope>SUBUNIT</scope>
</reference>
<reference key="6">
    <citation type="journal article" date="1999" name="J. Biol. Chem.">
        <title>The action of N-terminal acetyltransferases on yeast ribosomal proteins.</title>
        <authorList>
            <person name="Arnold R.J."/>
            <person name="Polevoda B."/>
            <person name="Reilly J.P."/>
            <person name="Sherman F."/>
        </authorList>
    </citation>
    <scope>CLEAVAGE OF INITIATOR METHIONINE</scope>
</reference>
<reference key="7">
    <citation type="journal article" date="2008" name="Mol. Cell. Proteomics">
        <title>A multidimensional chromatography technology for in-depth phosphoproteome analysis.</title>
        <authorList>
            <person name="Albuquerque C.P."/>
            <person name="Smolka M.B."/>
            <person name="Payne S.H."/>
            <person name="Bafna V."/>
            <person name="Eng J."/>
            <person name="Zhou H."/>
        </authorList>
    </citation>
    <scope>PHOSPHORYLATION [LARGE SCALE ANALYSIS] AT SER-32</scope>
    <scope>IDENTIFICATION BY MASS SPECTROMETRY [LARGE SCALE ANALYSIS]</scope>
</reference>
<reference key="8">
    <citation type="journal article" date="2012" name="Proteomics">
        <title>Sites of ubiquitin attachment in Saccharomyces cerevisiae.</title>
        <authorList>
            <person name="Starita L.M."/>
            <person name="Lo R.S."/>
            <person name="Eng J.K."/>
            <person name="von Haller P.D."/>
            <person name="Fields S."/>
        </authorList>
    </citation>
    <scope>UBIQUITINATION [LARGE SCALE ANALYSIS] AT LYS-39 AND LYS-43</scope>
    <scope>IDENTIFICATION BY MASS SPECTROMETRY [LARGE SCALE ANALYSIS]</scope>
</reference>
<reference key="9">
    <citation type="journal article" date="2014" name="Curr. Opin. Struct. Biol.">
        <title>A new system for naming ribosomal proteins.</title>
        <authorList>
            <person name="Ban N."/>
            <person name="Beckmann R."/>
            <person name="Cate J.H.D."/>
            <person name="Dinman J.D."/>
            <person name="Dragon F."/>
            <person name="Ellis S.R."/>
            <person name="Lafontaine D.L.J."/>
            <person name="Lindahl L."/>
            <person name="Liljas A."/>
            <person name="Lipton J.M."/>
            <person name="McAlear M.A."/>
            <person name="Moore P.B."/>
            <person name="Noller H.F."/>
            <person name="Ortega J."/>
            <person name="Panse V.G."/>
            <person name="Ramakrishnan V."/>
            <person name="Spahn C.M.T."/>
            <person name="Steitz T.A."/>
            <person name="Tchorzewski M."/>
            <person name="Tollervey D."/>
            <person name="Warren A.J."/>
            <person name="Williamson J.R."/>
            <person name="Wilson D."/>
            <person name="Yonath A."/>
            <person name="Yusupov M."/>
        </authorList>
    </citation>
    <scope>NOMENCLATURE</scope>
</reference>
<reference key="10">
    <citation type="journal article" date="2001" name="Cell">
        <title>Structure of the 80S ribosome from Saccharomyces cerevisiae -- tRNA-ribosome and subunit-subunit interactions.</title>
        <authorList>
            <person name="Spahn C.M.T."/>
            <person name="Beckmann R."/>
            <person name="Eswar N."/>
            <person name="Penczek P.A."/>
            <person name="Sali A."/>
            <person name="Blobel G."/>
            <person name="Frank J."/>
        </authorList>
    </citation>
    <scope>3D-STRUCTURE MODELING OF 66-130</scope>
    <scope>ELECTRON MICROSCOPY</scope>
</reference>
<reference key="11">
    <citation type="journal article" date="2004" name="EMBO J.">
        <title>Domain movements of elongation factor eEF2 and the eukaryotic 80S ribosome facilitate tRNA translocation.</title>
        <authorList>
            <person name="Spahn C.M.T."/>
            <person name="Gomez-Lorenzo M.G."/>
            <person name="Grassucci R.A."/>
            <person name="Joergensen R."/>
            <person name="Andersen G.R."/>
            <person name="Beckmann R."/>
            <person name="Penczek P.A."/>
            <person name="Ballesta J.P.G."/>
            <person name="Frank J."/>
        </authorList>
    </citation>
    <scope>3D-STRUCTURE MODELING OF 66-130</scope>
    <scope>ELECTRON MICROSCOPY</scope>
</reference>
<reference key="12">
    <citation type="journal article" date="2010" name="Science">
        <title>Crystal structure of the eukaryotic ribosome.</title>
        <authorList>
            <person name="Ben-Shem A."/>
            <person name="Jenner L."/>
            <person name="Yusupova G."/>
            <person name="Yusupov M."/>
        </authorList>
    </citation>
    <scope>X-RAY CRYSTALLOGRAPHY (4.00 ANGSTROMS) OF 80S RIBOSOME</scope>
</reference>
<reference key="13">
    <citation type="journal article" date="2011" name="Science">
        <title>The structure of the eukaryotic ribosome at 3.0 A resolution.</title>
        <authorList>
            <person name="Ben-Shem A."/>
            <person name="Garreau de Loubresse N."/>
            <person name="Melnikov S."/>
            <person name="Jenner L."/>
            <person name="Yusupova G."/>
            <person name="Yusupov M."/>
        </authorList>
    </citation>
    <scope>X-RAY CRYSTALLOGRAPHY (3.00 ANGSTROMS) OF 80S RIBOSOME</scope>
    <scope>SUBUNIT</scope>
    <scope>SUBCELLULAR LOCATION</scope>
</reference>